<organism>
    <name type="scientific">Elizabethkingia meningoseptica</name>
    <name type="common">Chryseobacterium meningosepticum</name>
    <dbReference type="NCBI Taxonomy" id="238"/>
    <lineage>
        <taxon>Bacteria</taxon>
        <taxon>Pseudomonadati</taxon>
        <taxon>Bacteroidota</taxon>
        <taxon>Flavobacteriia</taxon>
        <taxon>Flavobacteriales</taxon>
        <taxon>Weeksellaceae</taxon>
        <taxon>Elizabethkingia</taxon>
    </lineage>
</organism>
<comment type="function">
    <text evidence="1">Confers resistance to the different beta-lactams antibiotics (penicillin, cephalosporin and carbapenem) via the hydrolysis of the beta-lactam ring.</text>
</comment>
<comment type="catalytic activity">
    <reaction evidence="1">
        <text>a beta-lactam + H2O = a substituted beta-amino acid</text>
        <dbReference type="Rhea" id="RHEA:20401"/>
        <dbReference type="ChEBI" id="CHEBI:15377"/>
        <dbReference type="ChEBI" id="CHEBI:35627"/>
        <dbReference type="ChEBI" id="CHEBI:140347"/>
        <dbReference type="EC" id="3.5.2.6"/>
    </reaction>
</comment>
<comment type="cofactor">
    <cofactor evidence="1">
        <name>Zn(2+)</name>
        <dbReference type="ChEBI" id="CHEBI:29105"/>
    </cofactor>
    <text evidence="1">Binds 2 Zn(2+) ions per subunit.</text>
</comment>
<comment type="subunit">
    <text evidence="1">Monomer.</text>
</comment>
<comment type="subcellular location">
    <subcellularLocation>
        <location evidence="3">Periplasm</location>
    </subcellularLocation>
</comment>
<comment type="similarity">
    <text evidence="3">Belongs to the metallo-beta-lactamase superfamily. Class-B beta-lactamase family.</text>
</comment>
<sequence>MKRLKGLLVLALGFTGLQVFGQQNPDIKIEKLKDNLYVYTTYNTFKGTKYAANAVYMVTDKGVVVIDSPWGEDKFKSFTDEIYKKHGKKVIMNIATHSHDDRAGGLEYFGKLGAKTYSTKMTDSILAKENKPRAKYTFDNNKSFKVGNTEFQVYYPGKGHTADNVVVWFPKDKVLVGGCIVKSGDSKDLGFIGEAYVNDWTQSIHNIQQKFPDVQYVVAGHDDWKDQTSIQHTLDLISEYQQKQKASN</sequence>
<evidence type="ECO:0000250" key="1">
    <source>
        <dbReference type="UniProtKB" id="O08498"/>
    </source>
</evidence>
<evidence type="ECO:0000255" key="2"/>
<evidence type="ECO:0000305" key="3"/>
<proteinExistence type="inferred from homology"/>
<protein>
    <recommendedName>
        <fullName evidence="3">Metallo-beta-lactamase type 2</fullName>
        <ecNumber evidence="1">3.5.2.6</ecNumber>
    </recommendedName>
    <alternativeName>
        <fullName evidence="1">B2 metallo-beta-lactamase</fullName>
    </alternativeName>
    <alternativeName>
        <fullName evidence="1">Beta-lactamase type II</fullName>
    </alternativeName>
    <alternativeName>
        <fullName evidence="1">Carbapenem-hydrolyzing beta-lactamase BlaB-6</fullName>
        <shortName evidence="1">CHbetaL-6</shortName>
    </alternativeName>
    <alternativeName>
        <fullName evidence="1">Class B carbapenemase BlaB-6</fullName>
    </alternativeName>
    <alternativeName>
        <fullName evidence="1">Metallo-beta-lactamase type II</fullName>
    </alternativeName>
</protein>
<dbReference type="EC" id="3.5.2.6" evidence="1"/>
<dbReference type="EMBL" id="AF189302">
    <property type="protein sequence ID" value="AAF89158.1"/>
    <property type="molecule type" value="Genomic_DNA"/>
</dbReference>
<dbReference type="SMR" id="Q9KJB0"/>
<dbReference type="KEGG" id="ag:AAF89158"/>
<dbReference type="GO" id="GO:0042597">
    <property type="term" value="C:periplasmic space"/>
    <property type="evidence" value="ECO:0007669"/>
    <property type="project" value="UniProtKB-SubCell"/>
</dbReference>
<dbReference type="GO" id="GO:0008800">
    <property type="term" value="F:beta-lactamase activity"/>
    <property type="evidence" value="ECO:0007669"/>
    <property type="project" value="UniProtKB-EC"/>
</dbReference>
<dbReference type="GO" id="GO:0008270">
    <property type="term" value="F:zinc ion binding"/>
    <property type="evidence" value="ECO:0007669"/>
    <property type="project" value="InterPro"/>
</dbReference>
<dbReference type="GO" id="GO:0017001">
    <property type="term" value="P:antibiotic catabolic process"/>
    <property type="evidence" value="ECO:0007669"/>
    <property type="project" value="InterPro"/>
</dbReference>
<dbReference type="GO" id="GO:0046677">
    <property type="term" value="P:response to antibiotic"/>
    <property type="evidence" value="ECO:0007669"/>
    <property type="project" value="UniProtKB-KW"/>
</dbReference>
<dbReference type="CDD" id="cd16316">
    <property type="entry name" value="BlaB-like_MBL-B1"/>
    <property type="match status" value="1"/>
</dbReference>
<dbReference type="FunFam" id="3.60.15.10:FF:000096">
    <property type="entry name" value="Metallo-beta-lactamase type 2"/>
    <property type="match status" value="1"/>
</dbReference>
<dbReference type="Gene3D" id="3.60.15.10">
    <property type="entry name" value="Ribonuclease Z/Hydroxyacylglutathione hydrolase-like"/>
    <property type="match status" value="1"/>
</dbReference>
<dbReference type="InterPro" id="IPR001018">
    <property type="entry name" value="Beta-lactamase_class-B_CS"/>
</dbReference>
<dbReference type="InterPro" id="IPR001279">
    <property type="entry name" value="Metallo-B-lactamas"/>
</dbReference>
<dbReference type="InterPro" id="IPR050855">
    <property type="entry name" value="NDM-1-like"/>
</dbReference>
<dbReference type="InterPro" id="IPR036866">
    <property type="entry name" value="RibonucZ/Hydroxyglut_hydro"/>
</dbReference>
<dbReference type="NCBIfam" id="NF012229">
    <property type="entry name" value="bla_class_B_core"/>
    <property type="match status" value="1"/>
</dbReference>
<dbReference type="NCBIfam" id="NF033088">
    <property type="entry name" value="bla_subclass_B1"/>
    <property type="match status" value="1"/>
</dbReference>
<dbReference type="NCBIfam" id="NF033107">
    <property type="entry name" value="blaB"/>
    <property type="match status" value="1"/>
</dbReference>
<dbReference type="NCBIfam" id="NF012146">
    <property type="entry name" value="blaB-IND-MUS"/>
    <property type="match status" value="1"/>
</dbReference>
<dbReference type="PANTHER" id="PTHR42951:SF4">
    <property type="entry name" value="ACYL-COENZYME A THIOESTERASE MBLAC2"/>
    <property type="match status" value="1"/>
</dbReference>
<dbReference type="PANTHER" id="PTHR42951">
    <property type="entry name" value="METALLO-BETA-LACTAMASE DOMAIN-CONTAINING"/>
    <property type="match status" value="1"/>
</dbReference>
<dbReference type="Pfam" id="PF00753">
    <property type="entry name" value="Lactamase_B"/>
    <property type="match status" value="1"/>
</dbReference>
<dbReference type="SMART" id="SM00849">
    <property type="entry name" value="Lactamase_B"/>
    <property type="match status" value="1"/>
</dbReference>
<dbReference type="SUPFAM" id="SSF56281">
    <property type="entry name" value="Metallo-hydrolase/oxidoreductase"/>
    <property type="match status" value="1"/>
</dbReference>
<dbReference type="PROSITE" id="PS00743">
    <property type="entry name" value="BETA_LACTAMASE_B_1"/>
    <property type="match status" value="1"/>
</dbReference>
<dbReference type="PROSITE" id="PS00744">
    <property type="entry name" value="BETA_LACTAMASE_B_2"/>
    <property type="match status" value="1"/>
</dbReference>
<keyword id="KW-0046">Antibiotic resistance</keyword>
<keyword id="KW-0378">Hydrolase</keyword>
<keyword id="KW-0479">Metal-binding</keyword>
<keyword id="KW-0574">Periplasm</keyword>
<keyword id="KW-0732">Signal</keyword>
<keyword id="KW-0862">Zinc</keyword>
<accession>Q9KJB0</accession>
<name>BLAB6_ELIME</name>
<reference key="1">
    <citation type="journal article" date="2000" name="Antimicrob. Agents Chemother.">
        <title>Molecular and biochemical heterogeneity of class B carbapenem-hydrolyzing beta-lactamases in Chryseobacterium meningosepticum.</title>
        <authorList>
            <person name="Bellais S."/>
            <person name="Aubert D."/>
            <person name="Naas T."/>
            <person name="Nordmann P."/>
        </authorList>
    </citation>
    <scope>NUCLEOTIDE SEQUENCE [GENOMIC DNA]</scope>
    <source>
        <strain>NCTC 11305 / CIP 78.30</strain>
    </source>
</reference>
<feature type="signal peptide" evidence="1 2">
    <location>
        <begin position="1"/>
        <end position="21"/>
    </location>
</feature>
<feature type="chain" id="PRO_0000016954" description="Metallo-beta-lactamase type 2">
    <location>
        <begin position="22"/>
        <end position="248"/>
    </location>
</feature>
<feature type="binding site" evidence="1">
    <location>
        <position position="97"/>
    </location>
    <ligand>
        <name>Zn(2+)</name>
        <dbReference type="ChEBI" id="CHEBI:29105"/>
        <label>1</label>
    </ligand>
</feature>
<feature type="binding site" evidence="1">
    <location>
        <position position="99"/>
    </location>
    <ligand>
        <name>Zn(2+)</name>
        <dbReference type="ChEBI" id="CHEBI:29105"/>
        <label>1</label>
    </ligand>
</feature>
<feature type="binding site" evidence="1">
    <location>
        <position position="101"/>
    </location>
    <ligand>
        <name>Zn(2+)</name>
        <dbReference type="ChEBI" id="CHEBI:29105"/>
        <label>2</label>
    </ligand>
</feature>
<feature type="binding site" evidence="1">
    <location>
        <position position="160"/>
    </location>
    <ligand>
        <name>Zn(2+)</name>
        <dbReference type="ChEBI" id="CHEBI:29105"/>
        <label>1</label>
    </ligand>
</feature>
<feature type="binding site" evidence="1">
    <location>
        <position position="179"/>
    </location>
    <ligand>
        <name>Zn(2+)</name>
        <dbReference type="ChEBI" id="CHEBI:29105"/>
        <label>2</label>
    </ligand>
</feature>
<feature type="binding site" evidence="1">
    <location>
        <position position="182"/>
    </location>
    <ligand>
        <name>substrate</name>
    </ligand>
</feature>
<feature type="binding site" evidence="1">
    <location>
        <position position="221"/>
    </location>
    <ligand>
        <name>Zn(2+)</name>
        <dbReference type="ChEBI" id="CHEBI:29105"/>
        <label>2</label>
    </ligand>
</feature>
<gene>
    <name type="primary">blaB6</name>
    <name evidence="1" type="synonym">blaB</name>
</gene>